<evidence type="ECO:0000255" key="1">
    <source>
        <dbReference type="HAMAP-Rule" id="MF_00291"/>
    </source>
</evidence>
<evidence type="ECO:0000256" key="2">
    <source>
        <dbReference type="SAM" id="MobiDB-lite"/>
    </source>
</evidence>
<evidence type="ECO:0000305" key="3"/>
<proteinExistence type="inferred from homology"/>
<reference key="1">
    <citation type="journal article" date="2009" name="Environ. Microbiol.">
        <title>Contribution of mobile genetic elements to Desulfovibrio vulgaris genome plasticity.</title>
        <authorList>
            <person name="Walker C.B."/>
            <person name="Stolyar S."/>
            <person name="Chivian D."/>
            <person name="Pinel N."/>
            <person name="Gabster J.A."/>
            <person name="Dehal P.S."/>
            <person name="He Z."/>
            <person name="Yang Z.K."/>
            <person name="Yen H.C."/>
            <person name="Zhou J."/>
            <person name="Wall J.D."/>
            <person name="Hazen T.C."/>
            <person name="Arkin A.P."/>
            <person name="Stahl D.A."/>
        </authorList>
    </citation>
    <scope>NUCLEOTIDE SEQUENCE [LARGE SCALE GENOMIC DNA]</scope>
    <source>
        <strain>DP4</strain>
    </source>
</reference>
<name>RS2_NITV4</name>
<feature type="chain" id="PRO_1000003951" description="Small ribosomal subunit protein uS2">
    <location>
        <begin position="1"/>
        <end position="254"/>
    </location>
</feature>
<feature type="region of interest" description="Disordered" evidence="2">
    <location>
        <begin position="228"/>
        <end position="254"/>
    </location>
</feature>
<feature type="compositionally biased region" description="Basic and acidic residues" evidence="2">
    <location>
        <begin position="228"/>
        <end position="248"/>
    </location>
</feature>
<comment type="similarity">
    <text evidence="1">Belongs to the universal ribosomal protein uS2 family.</text>
</comment>
<keyword id="KW-0687">Ribonucleoprotein</keyword>
<keyword id="KW-0689">Ribosomal protein</keyword>
<dbReference type="EMBL" id="CP000527">
    <property type="protein sequence ID" value="ABM29124.1"/>
    <property type="molecule type" value="Genomic_DNA"/>
</dbReference>
<dbReference type="RefSeq" id="WP_010938173.1">
    <property type="nucleotide sequence ID" value="NC_008751.1"/>
</dbReference>
<dbReference type="SMR" id="A1VFA8"/>
<dbReference type="KEGG" id="dvl:Dvul_2108"/>
<dbReference type="HOGENOM" id="CLU_040318_1_2_7"/>
<dbReference type="Proteomes" id="UP000009173">
    <property type="component" value="Chromosome"/>
</dbReference>
<dbReference type="GO" id="GO:0022627">
    <property type="term" value="C:cytosolic small ribosomal subunit"/>
    <property type="evidence" value="ECO:0007669"/>
    <property type="project" value="TreeGrafter"/>
</dbReference>
<dbReference type="GO" id="GO:0003735">
    <property type="term" value="F:structural constituent of ribosome"/>
    <property type="evidence" value="ECO:0007669"/>
    <property type="project" value="InterPro"/>
</dbReference>
<dbReference type="GO" id="GO:0006412">
    <property type="term" value="P:translation"/>
    <property type="evidence" value="ECO:0007669"/>
    <property type="project" value="UniProtKB-UniRule"/>
</dbReference>
<dbReference type="CDD" id="cd01425">
    <property type="entry name" value="RPS2"/>
    <property type="match status" value="1"/>
</dbReference>
<dbReference type="FunFam" id="1.10.287.610:FF:000001">
    <property type="entry name" value="30S ribosomal protein S2"/>
    <property type="match status" value="1"/>
</dbReference>
<dbReference type="Gene3D" id="3.40.50.10490">
    <property type="entry name" value="Glucose-6-phosphate isomerase like protein, domain 1"/>
    <property type="match status" value="1"/>
</dbReference>
<dbReference type="Gene3D" id="1.10.287.610">
    <property type="entry name" value="Helix hairpin bin"/>
    <property type="match status" value="1"/>
</dbReference>
<dbReference type="HAMAP" id="MF_00291_B">
    <property type="entry name" value="Ribosomal_uS2_B"/>
    <property type="match status" value="1"/>
</dbReference>
<dbReference type="InterPro" id="IPR001865">
    <property type="entry name" value="Ribosomal_uS2"/>
</dbReference>
<dbReference type="InterPro" id="IPR005706">
    <property type="entry name" value="Ribosomal_uS2_bac/mit/plastid"/>
</dbReference>
<dbReference type="InterPro" id="IPR018130">
    <property type="entry name" value="Ribosomal_uS2_CS"/>
</dbReference>
<dbReference type="InterPro" id="IPR023591">
    <property type="entry name" value="Ribosomal_uS2_flav_dom_sf"/>
</dbReference>
<dbReference type="NCBIfam" id="TIGR01011">
    <property type="entry name" value="rpsB_bact"/>
    <property type="match status" value="1"/>
</dbReference>
<dbReference type="PANTHER" id="PTHR12534">
    <property type="entry name" value="30S RIBOSOMAL PROTEIN S2 PROKARYOTIC AND ORGANELLAR"/>
    <property type="match status" value="1"/>
</dbReference>
<dbReference type="PANTHER" id="PTHR12534:SF0">
    <property type="entry name" value="SMALL RIBOSOMAL SUBUNIT PROTEIN US2M"/>
    <property type="match status" value="1"/>
</dbReference>
<dbReference type="Pfam" id="PF00318">
    <property type="entry name" value="Ribosomal_S2"/>
    <property type="match status" value="1"/>
</dbReference>
<dbReference type="PRINTS" id="PR00395">
    <property type="entry name" value="RIBOSOMALS2"/>
</dbReference>
<dbReference type="SUPFAM" id="SSF52313">
    <property type="entry name" value="Ribosomal protein S2"/>
    <property type="match status" value="1"/>
</dbReference>
<dbReference type="PROSITE" id="PS00962">
    <property type="entry name" value="RIBOSOMAL_S2_1"/>
    <property type="match status" value="1"/>
</dbReference>
<sequence>MAYVSMKQMLETGVHFGHQTRRWNPKMRPFIFGARNGIHIIDLQQTVKMFRVAHDKVVDTVANGGRVMFIGTKRQAQEAVATEAGRAGQFYVTNRWMGGTLTNFFTIQKSIDRLKKLEAMFADGTVNRYQKKEILRLQREMDKLLATLGGIKDMDKLPQLAFVIDPHREDIAIKECRKLGIPIVAVTDTNCDPDLIDFVIPGNDDAIRAIKLFVAAIADACLEGDALRKERKGQDAEEELKKASEPKAAEAAAE</sequence>
<accession>A1VFA8</accession>
<protein>
    <recommendedName>
        <fullName evidence="1">Small ribosomal subunit protein uS2</fullName>
    </recommendedName>
    <alternativeName>
        <fullName evidence="3">30S ribosomal protein S2</fullName>
    </alternativeName>
</protein>
<gene>
    <name evidence="1" type="primary">rpsB</name>
    <name type="ordered locus">Dvul_2108</name>
</gene>
<organism>
    <name type="scientific">Nitratidesulfovibrio vulgaris (strain DP4)</name>
    <name type="common">Desulfovibrio vulgaris</name>
    <dbReference type="NCBI Taxonomy" id="391774"/>
    <lineage>
        <taxon>Bacteria</taxon>
        <taxon>Pseudomonadati</taxon>
        <taxon>Thermodesulfobacteriota</taxon>
        <taxon>Desulfovibrionia</taxon>
        <taxon>Desulfovibrionales</taxon>
        <taxon>Desulfovibrionaceae</taxon>
        <taxon>Nitratidesulfovibrio</taxon>
    </lineage>
</organism>